<organism>
    <name type="scientific">Lychas mucronatus</name>
    <name type="common">Chinese swimming scorpion</name>
    <dbReference type="NCBI Taxonomy" id="172552"/>
    <lineage>
        <taxon>Eukaryota</taxon>
        <taxon>Metazoa</taxon>
        <taxon>Ecdysozoa</taxon>
        <taxon>Arthropoda</taxon>
        <taxon>Chelicerata</taxon>
        <taxon>Arachnida</taxon>
        <taxon>Scorpiones</taxon>
        <taxon>Buthida</taxon>
        <taxon>Buthoidea</taxon>
        <taxon>Buthidae</taxon>
        <taxon>Lychas</taxon>
    </lineage>
</organism>
<accession>D9U2A3</accession>
<protein>
    <recommendedName>
        <fullName>Neurotoxin 23</fullName>
    </recommendedName>
</protein>
<comment type="subcellular location">
    <subcellularLocation>
        <location evidence="1">Secreted</location>
    </subcellularLocation>
</comment>
<comment type="tissue specificity">
    <text>Expressed by the venom gland.</text>
</comment>
<comment type="domain">
    <text evidence="4">Has the structural arrangement of an alpha-helix connected to antiparallel beta-sheets by disulfide bonds (CS-alpha/beta).</text>
</comment>
<comment type="similarity">
    <text>Belongs to the long (3 C-C) scorpion toxin superfamily.</text>
</comment>
<proteinExistence type="evidence at transcript level"/>
<name>STX23_LYCMC</name>
<dbReference type="EMBL" id="EU159298">
    <property type="protein sequence ID" value="ABX76771.1"/>
    <property type="molecule type" value="mRNA"/>
</dbReference>
<dbReference type="SMR" id="D9U2A3"/>
<dbReference type="GO" id="GO:0005576">
    <property type="term" value="C:extracellular region"/>
    <property type="evidence" value="ECO:0007669"/>
    <property type="project" value="UniProtKB-SubCell"/>
</dbReference>
<dbReference type="GO" id="GO:0019871">
    <property type="term" value="F:sodium channel inhibitor activity"/>
    <property type="evidence" value="ECO:0007669"/>
    <property type="project" value="InterPro"/>
</dbReference>
<dbReference type="GO" id="GO:0090729">
    <property type="term" value="F:toxin activity"/>
    <property type="evidence" value="ECO:0007669"/>
    <property type="project" value="UniProtKB-KW"/>
</dbReference>
<dbReference type="CDD" id="cd23106">
    <property type="entry name" value="neurotoxins_LC_scorpion"/>
    <property type="match status" value="1"/>
</dbReference>
<dbReference type="Gene3D" id="3.30.30.10">
    <property type="entry name" value="Knottin, scorpion toxin-like"/>
    <property type="match status" value="1"/>
</dbReference>
<dbReference type="InterPro" id="IPR044062">
    <property type="entry name" value="LCN-type_CS_alpha_beta_dom"/>
</dbReference>
<dbReference type="InterPro" id="IPR036574">
    <property type="entry name" value="Scorpion_toxin-like_sf"/>
</dbReference>
<dbReference type="InterPro" id="IPR002061">
    <property type="entry name" value="Scorpion_toxinL/defensin"/>
</dbReference>
<dbReference type="Pfam" id="PF00537">
    <property type="entry name" value="Toxin_3"/>
    <property type="match status" value="1"/>
</dbReference>
<dbReference type="SUPFAM" id="SSF57095">
    <property type="entry name" value="Scorpion toxin-like"/>
    <property type="match status" value="1"/>
</dbReference>
<dbReference type="PROSITE" id="PS51863">
    <property type="entry name" value="LCN_CSAB"/>
    <property type="match status" value="1"/>
</dbReference>
<evidence type="ECO:0000250" key="1"/>
<evidence type="ECO:0000255" key="2"/>
<evidence type="ECO:0000255" key="3">
    <source>
        <dbReference type="PROSITE-ProRule" id="PRU01210"/>
    </source>
</evidence>
<evidence type="ECO:0000305" key="4"/>
<keyword id="KW-1015">Disulfide bond</keyword>
<keyword id="KW-0528">Neurotoxin</keyword>
<keyword id="KW-0964">Secreted</keyword>
<keyword id="KW-0732">Signal</keyword>
<keyword id="KW-0800">Toxin</keyword>
<sequence length="96" mass="11186">MKNIVIIITVAVLFNLFGESLQMVPFETYPLNQDDSKYDCLTNGYNPYCQDICKLHNTKEGYCKKFFCICEKLSKENVKFLAEIIDTCNERLDEIL</sequence>
<feature type="signal peptide" evidence="2">
    <location>
        <begin position="1"/>
        <end position="22"/>
    </location>
</feature>
<feature type="chain" id="PRO_0000403890" description="Neurotoxin 23">
    <location>
        <begin position="23"/>
        <end position="96"/>
    </location>
</feature>
<feature type="domain" description="LCN-type CS-alpha/beta" evidence="3">
    <location>
        <begin position="26"/>
        <end position="89"/>
    </location>
</feature>
<feature type="disulfide bond" evidence="3">
    <location>
        <begin position="40"/>
        <end position="63"/>
    </location>
</feature>
<feature type="disulfide bond" evidence="3">
    <location>
        <begin position="49"/>
        <end position="68"/>
    </location>
</feature>
<feature type="disulfide bond" evidence="3">
    <location>
        <begin position="53"/>
        <end position="70"/>
    </location>
</feature>
<reference key="1">
    <citation type="journal article" date="2010" name="BMC Genomics">
        <title>Comparative venom gland transcriptome analysis of the scorpion Lychas mucronatus reveals intraspecific toxic gene diversity and new venomous components.</title>
        <authorList>
            <person name="Zhao R."/>
            <person name="Ma Y."/>
            <person name="He Y."/>
            <person name="Di Z."/>
            <person name="Wu Y.-L."/>
            <person name="Cao Z.-J."/>
            <person name="Li W.-X."/>
        </authorList>
    </citation>
    <scope>NUCLEOTIDE SEQUENCE [MRNA]</scope>
    <source>
        <strain>Hainan</strain>
        <tissue>Venom gland</tissue>
    </source>
</reference>